<sequence>MNSLSIFFIVVATAAVCLLFIQGYSIYENYGNIKEFNATHAAFEYSKSIGGTPALDRRVQDVNDTISDVKQKWRCVAYPGNGFVSASIFGFQAEVGPNNTRSIRKFNTMAQCIDFTFSDVINIDIYNPCVAPNINNVECQFLKSVL</sequence>
<dbReference type="EMBL" id="L22579">
    <property type="protein sequence ID" value="AAA60883.1"/>
    <property type="molecule type" value="Genomic_DNA"/>
</dbReference>
<dbReference type="EMBL" id="X76266">
    <property type="protein sequence ID" value="CAA53857.1"/>
    <property type="molecule type" value="Genomic_DNA"/>
</dbReference>
<dbReference type="EMBL" id="Y16780">
    <property type="protein sequence ID" value="CAB54735.1"/>
    <property type="molecule type" value="Genomic_DNA"/>
</dbReference>
<dbReference type="PIR" id="E72167">
    <property type="entry name" value="E72167"/>
</dbReference>
<dbReference type="PIR" id="JQ1834">
    <property type="entry name" value="JQ1834"/>
</dbReference>
<dbReference type="RefSeq" id="NP_042179.1">
    <property type="nucleotide sequence ID" value="NC_001611.1"/>
</dbReference>
<dbReference type="SMR" id="P0DSX8"/>
<dbReference type="GeneID" id="1486509"/>
<dbReference type="KEGG" id="vg:1486509"/>
<dbReference type="Proteomes" id="UP000111493">
    <property type="component" value="Segment"/>
</dbReference>
<dbReference type="Proteomes" id="UP000119805">
    <property type="component" value="Segment"/>
</dbReference>
<dbReference type="GO" id="GO:0016020">
    <property type="term" value="C:membrane"/>
    <property type="evidence" value="ECO:0007669"/>
    <property type="project" value="UniProtKB-KW"/>
</dbReference>
<dbReference type="GO" id="GO:0019031">
    <property type="term" value="C:viral envelope"/>
    <property type="evidence" value="ECO:0007669"/>
    <property type="project" value="InterPro"/>
</dbReference>
<dbReference type="GO" id="GO:0055036">
    <property type="term" value="C:virion membrane"/>
    <property type="evidence" value="ECO:0007669"/>
    <property type="project" value="UniProtKB-SubCell"/>
</dbReference>
<dbReference type="GO" id="GO:0039663">
    <property type="term" value="P:membrane fusion involved in viral entry into host cell"/>
    <property type="evidence" value="ECO:0007669"/>
    <property type="project" value="UniProtKB-KW"/>
</dbReference>
<dbReference type="GO" id="GO:0046718">
    <property type="term" value="P:symbiont entry into host cell"/>
    <property type="evidence" value="ECO:0007669"/>
    <property type="project" value="UniProtKB-KW"/>
</dbReference>
<dbReference type="InterPro" id="IPR007664">
    <property type="entry name" value="Poxvirus_A28"/>
</dbReference>
<dbReference type="Pfam" id="PF04584">
    <property type="entry name" value="Pox_A28"/>
    <property type="match status" value="1"/>
</dbReference>
<organism>
    <name type="scientific">Variola virus</name>
    <dbReference type="NCBI Taxonomy" id="10255"/>
    <lineage>
        <taxon>Viruses</taxon>
        <taxon>Varidnaviria</taxon>
        <taxon>Bamfordvirae</taxon>
        <taxon>Nucleocytoviricota</taxon>
        <taxon>Pokkesviricetes</taxon>
        <taxon>Chitovirales</taxon>
        <taxon>Poxviridae</taxon>
        <taxon>Chordopoxvirinae</taxon>
        <taxon>Orthopoxvirus</taxon>
    </lineage>
</organism>
<keyword id="KW-1015">Disulfide bond</keyword>
<keyword id="KW-1168">Fusion of virus membrane with host membrane</keyword>
<keyword id="KW-0426">Late protein</keyword>
<keyword id="KW-0472">Membrane</keyword>
<keyword id="KW-0597">Phosphoprotein</keyword>
<keyword id="KW-0735">Signal-anchor</keyword>
<keyword id="KW-0812">Transmembrane</keyword>
<keyword id="KW-1133">Transmembrane helix</keyword>
<keyword id="KW-1162">Viral penetration into host cytoplasm</keyword>
<keyword id="KW-0946">Virion</keyword>
<keyword id="KW-1160">Virus entry into host cell</keyword>
<name>PG155_VARV</name>
<protein>
    <recommendedName>
        <fullName>Envelope protein OPG155</fullName>
    </recommendedName>
    <alternativeName>
        <fullName>Protein A31</fullName>
    </alternativeName>
</protein>
<evidence type="ECO:0000250" key="1">
    <source>
        <dbReference type="UniProtKB" id="P68633"/>
    </source>
</evidence>
<evidence type="ECO:0000255" key="2"/>
<evidence type="ECO:0000305" key="3"/>
<comment type="function">
    <text evidence="1">Envelope protein required for virus entry into host cell and for cell-cell fusion (syncytium formation).</text>
</comment>
<comment type="subunit">
    <text evidence="1">Part of a stable entry-fusion complex (EFC) which is at least composed of proteins OPG143, OPG147, OPG155, OPG086, OPG094, OPG107, OPG104, and OPG099. Formation of the viral membrane is necessary for the assembly of the complex. Interacts directly with protein OPG107.</text>
</comment>
<comment type="subcellular location">
    <subcellularLocation>
        <location evidence="1">Virion membrane</location>
        <topology evidence="1">Single-pass type III membrane protein</topology>
    </subcellularLocation>
    <text evidence="1">Component of the mature virion (MV) membrane.</text>
</comment>
<comment type="PTM">
    <text evidence="1">Contains two intramolecular disulfide bonds. They are created by the viral disulfide bond formation pathway, a poxvirus-specific pathway that operates on the cytoplasmic side of the MV membranes.</text>
</comment>
<comment type="similarity">
    <text evidence="3">Belongs to the orthopoxvirus OPG155 protein family.</text>
</comment>
<organismHost>
    <name type="scientific">Homo sapiens</name>
    <name type="common">Human</name>
    <dbReference type="NCBI Taxonomy" id="9606"/>
</organismHost>
<gene>
    <name type="primary">OPG155</name>
    <name type="ORF">A31.5L</name>
    <name type="ORF">A31L</name>
    <name type="ORF">A32L</name>
</gene>
<feature type="chain" id="PRO_0000448161" description="Envelope protein OPG155">
    <location>
        <begin position="1"/>
        <end position="146"/>
    </location>
</feature>
<feature type="transmembrane region" description="Helical; Signal-anchor for type III membrane protein" evidence="2">
    <location>
        <begin position="1"/>
        <end position="21"/>
    </location>
</feature>
<feature type="topological domain" description="Intravirion" evidence="2">
    <location>
        <begin position="22"/>
        <end position="146"/>
    </location>
</feature>
<reference key="1">
    <citation type="journal article" date="1992" name="J. Gen. Virol.">
        <title>Nucleotide sequence of 21.8 kbp of variola major virus strain Harvey and comparison with vaccinia virus.</title>
        <authorList>
            <person name="Aguado B."/>
            <person name="Selmes I.P."/>
            <person name="Smith G.L."/>
        </authorList>
    </citation>
    <scope>NUCLEOTIDE SEQUENCE [GENOMIC DNA]</scope>
    <source>
        <strain>Harvey</strain>
    </source>
</reference>
<reference key="2">
    <citation type="journal article" date="1993" name="Nature">
        <title>Potential virulence determinants in terminal regions of variola smallpox virus genome.</title>
        <authorList>
            <person name="Massung R.F."/>
            <person name="Esposito J.J."/>
            <person name="Liu L.I."/>
            <person name="Qi J."/>
            <person name="Utterback T.R."/>
            <person name="Knight J.C."/>
            <person name="Aubin L."/>
            <person name="Yuran T.E."/>
            <person name="Parsons J.M."/>
            <person name="Loparev V.N."/>
            <person name="Selivanov N.A."/>
            <person name="Cavallaro K.F."/>
            <person name="Kerlavage A.R."/>
            <person name="Mahy B.W.J."/>
            <person name="Venter J.C."/>
        </authorList>
    </citation>
    <scope>NUCLEOTIDE SEQUENCE [GENOMIC DNA]</scope>
    <source>
        <strain>Bangladesh-1975</strain>
    </source>
</reference>
<reference key="3">
    <citation type="submission" date="1993-11" db="EMBL/GenBank/DDBJ databases">
        <authorList>
            <person name="Shchelkunov S.N."/>
            <person name="Totmenin A.V."/>
            <person name="Resenchuk S.M."/>
            <person name="Blinov V.M."/>
            <person name="Sandakhchiev L.S."/>
        </authorList>
    </citation>
    <scope>NUCLEOTIDE SEQUENCE [GENOMIC DNA]</scope>
    <source>
        <strain>Garcia-1966</strain>
    </source>
</reference>
<reference key="4">
    <citation type="journal article" date="2000" name="Virology">
        <title>Alastrim smallpox variola minor virus genome DNA sequences.</title>
        <authorList>
            <person name="Shchelkunov S.N."/>
            <person name="Totmenin A.V."/>
            <person name="Loparev V.N."/>
            <person name="Safronov P.F."/>
            <person name="Gutorov V.V."/>
            <person name="Chizhikov V.E."/>
            <person name="Knight J.C."/>
            <person name="Parsons J.M."/>
            <person name="Massung R.F."/>
            <person name="Esposito J.J."/>
        </authorList>
    </citation>
    <scope>NUCLEOTIDE SEQUENCE [LARGE SCALE GENOMIC DNA]</scope>
    <source>
        <strain>Garcia-1966</strain>
    </source>
</reference>
<proteinExistence type="inferred from homology"/>
<accession>P0DSX8</accession>
<accession>P33847</accession>